<gene>
    <name evidence="1" type="primary">rplP</name>
    <name type="ordered locus">HDEF_1859</name>
</gene>
<accession>C4K7B1</accession>
<protein>
    <recommendedName>
        <fullName evidence="1">Large ribosomal subunit protein uL16</fullName>
    </recommendedName>
    <alternativeName>
        <fullName evidence="2">50S ribosomal protein L16</fullName>
    </alternativeName>
</protein>
<name>RL16_HAMD5</name>
<comment type="function">
    <text evidence="1">Binds 23S rRNA and is also seen to make contacts with the A and possibly P site tRNAs.</text>
</comment>
<comment type="subunit">
    <text evidence="1">Part of the 50S ribosomal subunit.</text>
</comment>
<comment type="similarity">
    <text evidence="1">Belongs to the universal ribosomal protein uL16 family.</text>
</comment>
<dbReference type="EMBL" id="CP001277">
    <property type="protein sequence ID" value="ACQ68454.1"/>
    <property type="molecule type" value="Genomic_DNA"/>
</dbReference>
<dbReference type="RefSeq" id="WP_015874218.1">
    <property type="nucleotide sequence ID" value="NC_012751.1"/>
</dbReference>
<dbReference type="SMR" id="C4K7B1"/>
<dbReference type="STRING" id="572265.HDEF_1859"/>
<dbReference type="GeneID" id="66261444"/>
<dbReference type="KEGG" id="hde:HDEF_1859"/>
<dbReference type="eggNOG" id="COG0197">
    <property type="taxonomic scope" value="Bacteria"/>
</dbReference>
<dbReference type="HOGENOM" id="CLU_078858_2_1_6"/>
<dbReference type="Proteomes" id="UP000002334">
    <property type="component" value="Chromosome"/>
</dbReference>
<dbReference type="GO" id="GO:0022625">
    <property type="term" value="C:cytosolic large ribosomal subunit"/>
    <property type="evidence" value="ECO:0007669"/>
    <property type="project" value="TreeGrafter"/>
</dbReference>
<dbReference type="GO" id="GO:0019843">
    <property type="term" value="F:rRNA binding"/>
    <property type="evidence" value="ECO:0007669"/>
    <property type="project" value="UniProtKB-UniRule"/>
</dbReference>
<dbReference type="GO" id="GO:0003735">
    <property type="term" value="F:structural constituent of ribosome"/>
    <property type="evidence" value="ECO:0007669"/>
    <property type="project" value="InterPro"/>
</dbReference>
<dbReference type="GO" id="GO:0000049">
    <property type="term" value="F:tRNA binding"/>
    <property type="evidence" value="ECO:0007669"/>
    <property type="project" value="UniProtKB-KW"/>
</dbReference>
<dbReference type="GO" id="GO:0006412">
    <property type="term" value="P:translation"/>
    <property type="evidence" value="ECO:0007669"/>
    <property type="project" value="UniProtKB-UniRule"/>
</dbReference>
<dbReference type="CDD" id="cd01433">
    <property type="entry name" value="Ribosomal_L16_L10e"/>
    <property type="match status" value="1"/>
</dbReference>
<dbReference type="FunFam" id="3.90.1170.10:FF:000001">
    <property type="entry name" value="50S ribosomal protein L16"/>
    <property type="match status" value="1"/>
</dbReference>
<dbReference type="Gene3D" id="3.90.1170.10">
    <property type="entry name" value="Ribosomal protein L10e/L16"/>
    <property type="match status" value="1"/>
</dbReference>
<dbReference type="HAMAP" id="MF_01342">
    <property type="entry name" value="Ribosomal_uL16"/>
    <property type="match status" value="1"/>
</dbReference>
<dbReference type="InterPro" id="IPR047873">
    <property type="entry name" value="Ribosomal_uL16"/>
</dbReference>
<dbReference type="InterPro" id="IPR000114">
    <property type="entry name" value="Ribosomal_uL16_bact-type"/>
</dbReference>
<dbReference type="InterPro" id="IPR020798">
    <property type="entry name" value="Ribosomal_uL16_CS"/>
</dbReference>
<dbReference type="InterPro" id="IPR016180">
    <property type="entry name" value="Ribosomal_uL16_dom"/>
</dbReference>
<dbReference type="InterPro" id="IPR036920">
    <property type="entry name" value="Ribosomal_uL16_sf"/>
</dbReference>
<dbReference type="NCBIfam" id="TIGR01164">
    <property type="entry name" value="rplP_bact"/>
    <property type="match status" value="1"/>
</dbReference>
<dbReference type="PANTHER" id="PTHR12220">
    <property type="entry name" value="50S/60S RIBOSOMAL PROTEIN L16"/>
    <property type="match status" value="1"/>
</dbReference>
<dbReference type="PANTHER" id="PTHR12220:SF13">
    <property type="entry name" value="LARGE RIBOSOMAL SUBUNIT PROTEIN UL16M"/>
    <property type="match status" value="1"/>
</dbReference>
<dbReference type="Pfam" id="PF00252">
    <property type="entry name" value="Ribosomal_L16"/>
    <property type="match status" value="1"/>
</dbReference>
<dbReference type="PRINTS" id="PR00060">
    <property type="entry name" value="RIBOSOMALL16"/>
</dbReference>
<dbReference type="SUPFAM" id="SSF54686">
    <property type="entry name" value="Ribosomal protein L16p/L10e"/>
    <property type="match status" value="1"/>
</dbReference>
<dbReference type="PROSITE" id="PS00586">
    <property type="entry name" value="RIBOSOMAL_L16_1"/>
    <property type="match status" value="1"/>
</dbReference>
<dbReference type="PROSITE" id="PS00701">
    <property type="entry name" value="RIBOSOMAL_L16_2"/>
    <property type="match status" value="1"/>
</dbReference>
<reference key="1">
    <citation type="journal article" date="2009" name="Proc. Natl. Acad. Sci. U.S.A.">
        <title>Hamiltonella defensa, genome evolution of protective bacterial endosymbiont from pathogenic ancestors.</title>
        <authorList>
            <person name="Degnan P.H."/>
            <person name="Yu Y."/>
            <person name="Sisneros N."/>
            <person name="Wing R.A."/>
            <person name="Moran N.A."/>
        </authorList>
    </citation>
    <scope>NUCLEOTIDE SEQUENCE [LARGE SCALE GENOMIC DNA]</scope>
    <source>
        <strain>5AT</strain>
    </source>
</reference>
<proteinExistence type="inferred from homology"/>
<keyword id="KW-0687">Ribonucleoprotein</keyword>
<keyword id="KW-0689">Ribosomal protein</keyword>
<keyword id="KW-0694">RNA-binding</keyword>
<keyword id="KW-0699">rRNA-binding</keyword>
<keyword id="KW-0820">tRNA-binding</keyword>
<sequence length="136" mass="15401">MLQPKQTKFRKMHKGRNRGLANGTDVIFGHFGLKASGRCRLTARQIESARRAMTRCIKRQGKIWIRVFPDKPITQKPLEVRMGKGKGNVEYWVDLIQPGKVLFEMGDVSEEIAREAFKLAAAKLPVGTTFVTKTVM</sequence>
<organism>
    <name type="scientific">Hamiltonella defensa subsp. Acyrthosiphon pisum (strain 5AT)</name>
    <dbReference type="NCBI Taxonomy" id="572265"/>
    <lineage>
        <taxon>Bacteria</taxon>
        <taxon>Pseudomonadati</taxon>
        <taxon>Pseudomonadota</taxon>
        <taxon>Gammaproteobacteria</taxon>
        <taxon>Enterobacterales</taxon>
        <taxon>Enterobacteriaceae</taxon>
        <taxon>aphid secondary symbionts</taxon>
        <taxon>Candidatus Hamiltonella</taxon>
    </lineage>
</organism>
<evidence type="ECO:0000255" key="1">
    <source>
        <dbReference type="HAMAP-Rule" id="MF_01342"/>
    </source>
</evidence>
<evidence type="ECO:0000305" key="2"/>
<feature type="chain" id="PRO_1000214736" description="Large ribosomal subunit protein uL16">
    <location>
        <begin position="1"/>
        <end position="136"/>
    </location>
</feature>